<dbReference type="EC" id="4.3.3.7" evidence="1"/>
<dbReference type="EMBL" id="BX908798">
    <property type="protein sequence ID" value="CAF23410.1"/>
    <property type="molecule type" value="Genomic_DNA"/>
</dbReference>
<dbReference type="RefSeq" id="WP_011175236.1">
    <property type="nucleotide sequence ID" value="NC_005861.2"/>
</dbReference>
<dbReference type="SMR" id="Q6MDD9"/>
<dbReference type="STRING" id="264201.pc0686"/>
<dbReference type="KEGG" id="pcu:PC_RS03290"/>
<dbReference type="eggNOG" id="COG0329">
    <property type="taxonomic scope" value="Bacteria"/>
</dbReference>
<dbReference type="HOGENOM" id="CLU_049343_7_1_0"/>
<dbReference type="OrthoDB" id="9782828at2"/>
<dbReference type="UniPathway" id="UPA00034">
    <property type="reaction ID" value="UER00017"/>
</dbReference>
<dbReference type="Proteomes" id="UP000000529">
    <property type="component" value="Chromosome"/>
</dbReference>
<dbReference type="GO" id="GO:0005829">
    <property type="term" value="C:cytosol"/>
    <property type="evidence" value="ECO:0007669"/>
    <property type="project" value="TreeGrafter"/>
</dbReference>
<dbReference type="GO" id="GO:0008840">
    <property type="term" value="F:4-hydroxy-tetrahydrodipicolinate synthase activity"/>
    <property type="evidence" value="ECO:0007669"/>
    <property type="project" value="UniProtKB-UniRule"/>
</dbReference>
<dbReference type="GO" id="GO:0019877">
    <property type="term" value="P:diaminopimelate biosynthetic process"/>
    <property type="evidence" value="ECO:0007669"/>
    <property type="project" value="UniProtKB-UniRule"/>
</dbReference>
<dbReference type="GO" id="GO:0009089">
    <property type="term" value="P:lysine biosynthetic process via diaminopimelate"/>
    <property type="evidence" value="ECO:0007669"/>
    <property type="project" value="UniProtKB-UniRule"/>
</dbReference>
<dbReference type="CDD" id="cd00950">
    <property type="entry name" value="DHDPS"/>
    <property type="match status" value="1"/>
</dbReference>
<dbReference type="Gene3D" id="3.20.20.70">
    <property type="entry name" value="Aldolase class I"/>
    <property type="match status" value="1"/>
</dbReference>
<dbReference type="HAMAP" id="MF_00418">
    <property type="entry name" value="DapA"/>
    <property type="match status" value="1"/>
</dbReference>
<dbReference type="InterPro" id="IPR013785">
    <property type="entry name" value="Aldolase_TIM"/>
</dbReference>
<dbReference type="InterPro" id="IPR005263">
    <property type="entry name" value="DapA"/>
</dbReference>
<dbReference type="InterPro" id="IPR002220">
    <property type="entry name" value="DapA-like"/>
</dbReference>
<dbReference type="InterPro" id="IPR020624">
    <property type="entry name" value="Schiff_base-form_aldolases_CS"/>
</dbReference>
<dbReference type="NCBIfam" id="TIGR00674">
    <property type="entry name" value="dapA"/>
    <property type="match status" value="1"/>
</dbReference>
<dbReference type="PANTHER" id="PTHR12128:SF66">
    <property type="entry name" value="4-HYDROXY-2-OXOGLUTARATE ALDOLASE, MITOCHONDRIAL"/>
    <property type="match status" value="1"/>
</dbReference>
<dbReference type="PANTHER" id="PTHR12128">
    <property type="entry name" value="DIHYDRODIPICOLINATE SYNTHASE"/>
    <property type="match status" value="1"/>
</dbReference>
<dbReference type="Pfam" id="PF00701">
    <property type="entry name" value="DHDPS"/>
    <property type="match status" value="1"/>
</dbReference>
<dbReference type="PIRSF" id="PIRSF001365">
    <property type="entry name" value="DHDPS"/>
    <property type="match status" value="1"/>
</dbReference>
<dbReference type="PRINTS" id="PR00146">
    <property type="entry name" value="DHPICSNTHASE"/>
</dbReference>
<dbReference type="SMART" id="SM01130">
    <property type="entry name" value="DHDPS"/>
    <property type="match status" value="1"/>
</dbReference>
<dbReference type="SUPFAM" id="SSF51569">
    <property type="entry name" value="Aldolase"/>
    <property type="match status" value="1"/>
</dbReference>
<dbReference type="PROSITE" id="PS00665">
    <property type="entry name" value="DHDPS_1"/>
    <property type="match status" value="1"/>
</dbReference>
<feature type="chain" id="PRO_0000340980" description="4-hydroxy-tetrahydrodipicolinate synthase">
    <location>
        <begin position="1"/>
        <end position="300"/>
    </location>
</feature>
<feature type="active site" description="Proton donor/acceptor" evidence="1">
    <location>
        <position position="134"/>
    </location>
</feature>
<feature type="active site" description="Schiff-base intermediate with substrate" evidence="1">
    <location>
        <position position="162"/>
    </location>
</feature>
<feature type="binding site" evidence="1">
    <location>
        <position position="46"/>
    </location>
    <ligand>
        <name>pyruvate</name>
        <dbReference type="ChEBI" id="CHEBI:15361"/>
    </ligand>
</feature>
<feature type="binding site" evidence="1">
    <location>
        <position position="207"/>
    </location>
    <ligand>
        <name>pyruvate</name>
        <dbReference type="ChEBI" id="CHEBI:15361"/>
    </ligand>
</feature>
<feature type="site" description="Part of a proton relay during catalysis" evidence="1">
    <location>
        <position position="45"/>
    </location>
</feature>
<feature type="site" description="Part of a proton relay during catalysis" evidence="1">
    <location>
        <position position="108"/>
    </location>
</feature>
<keyword id="KW-0028">Amino-acid biosynthesis</keyword>
<keyword id="KW-0963">Cytoplasm</keyword>
<keyword id="KW-0220">Diaminopimelate biosynthesis</keyword>
<keyword id="KW-0456">Lyase</keyword>
<keyword id="KW-0457">Lysine biosynthesis</keyword>
<keyword id="KW-1185">Reference proteome</keyword>
<keyword id="KW-0704">Schiff base</keyword>
<reference key="1">
    <citation type="journal article" date="2004" name="Science">
        <title>Illuminating the evolutionary history of chlamydiae.</title>
        <authorList>
            <person name="Horn M."/>
            <person name="Collingro A."/>
            <person name="Schmitz-Esser S."/>
            <person name="Beier C.L."/>
            <person name="Purkhold U."/>
            <person name="Fartmann B."/>
            <person name="Brandt P."/>
            <person name="Nyakatura G.J."/>
            <person name="Droege M."/>
            <person name="Frishman D."/>
            <person name="Rattei T."/>
            <person name="Mewes H.-W."/>
            <person name="Wagner M."/>
        </authorList>
    </citation>
    <scope>NUCLEOTIDE SEQUENCE [LARGE SCALE GENOMIC DNA]</scope>
    <source>
        <strain>UWE25</strain>
    </source>
</reference>
<protein>
    <recommendedName>
        <fullName evidence="1">4-hydroxy-tetrahydrodipicolinate synthase</fullName>
        <shortName evidence="1">HTPA synthase</shortName>
        <ecNumber evidence="1">4.3.3.7</ecNumber>
    </recommendedName>
</protein>
<evidence type="ECO:0000255" key="1">
    <source>
        <dbReference type="HAMAP-Rule" id="MF_00418"/>
    </source>
</evidence>
<evidence type="ECO:0000305" key="2"/>
<gene>
    <name evidence="1" type="primary">dapA</name>
    <name type="ordered locus">pc0686</name>
</gene>
<name>DAPA_PARUW</name>
<organism>
    <name type="scientific">Protochlamydia amoebophila (strain UWE25)</name>
    <dbReference type="NCBI Taxonomy" id="264201"/>
    <lineage>
        <taxon>Bacteria</taxon>
        <taxon>Pseudomonadati</taxon>
        <taxon>Chlamydiota</taxon>
        <taxon>Chlamydiia</taxon>
        <taxon>Parachlamydiales</taxon>
        <taxon>Parachlamydiaceae</taxon>
        <taxon>Candidatus Protochlamydia</taxon>
    </lineage>
</organism>
<proteinExistence type="inferred from homology"/>
<accession>Q6MDD9</accession>
<comment type="function">
    <text evidence="1">Catalyzes the condensation of (S)-aspartate-beta-semialdehyde [(S)-ASA] and pyruvate to 4-hydroxy-tetrahydrodipicolinate (HTPA).</text>
</comment>
<comment type="catalytic activity">
    <reaction evidence="1">
        <text>L-aspartate 4-semialdehyde + pyruvate = (2S,4S)-4-hydroxy-2,3,4,5-tetrahydrodipicolinate + H2O + H(+)</text>
        <dbReference type="Rhea" id="RHEA:34171"/>
        <dbReference type="ChEBI" id="CHEBI:15361"/>
        <dbReference type="ChEBI" id="CHEBI:15377"/>
        <dbReference type="ChEBI" id="CHEBI:15378"/>
        <dbReference type="ChEBI" id="CHEBI:67139"/>
        <dbReference type="ChEBI" id="CHEBI:537519"/>
        <dbReference type="EC" id="4.3.3.7"/>
    </reaction>
</comment>
<comment type="pathway">
    <text evidence="1">Amino-acid biosynthesis; L-lysine biosynthesis via DAP pathway; (S)-tetrahydrodipicolinate from L-aspartate: step 3/4.</text>
</comment>
<comment type="subunit">
    <text evidence="1">Homotetramer; dimer of dimers.</text>
</comment>
<comment type="subcellular location">
    <subcellularLocation>
        <location evidence="1">Cytoplasm</location>
    </subcellularLocation>
</comment>
<comment type="similarity">
    <text evidence="1">Belongs to the DapA family.</text>
</comment>
<comment type="caution">
    <text evidence="2">Was originally thought to be a dihydrodipicolinate synthase (DHDPS), catalyzing the condensation of (S)-aspartate-beta-semialdehyde [(S)-ASA] and pyruvate to dihydrodipicolinate (DHDP). However, it was shown in E.coli that the product of the enzymatic reaction is not dihydrodipicolinate but in fact (4S)-4-hydroxy-2,3,4,5-tetrahydro-(2S)-dipicolinic acid (HTPA), and that the consecutive dehydration reaction leading to DHDP is not spontaneous but catalyzed by DapB.</text>
</comment>
<sequence>MYLKGLYTALITPFTPTGQLDEEGLKKLIQIQLHHQVDGVVVLGTTGESPTLTQIEKRRIIEIALEEIQGRIKVIVGTGSYSTQQAIEQTLQAKQMGADAALIVTPYYNKPTQEGIFKHFEAINQAVSFPICLYNIQGRTGQNIQTHTLKRISTLSSIIGVKETSGDINQIMDVIEAFRQSHPNFAILSGDDALTLPMIALGGHGIISVVSNLVPAAMKSLVNAALNGNFKKARIIHNQLYSFIKAAFIETNPIPIKAALSLSKLPAGSCRLPLCDLSQNHSQKLAQILNELPQEWISHG</sequence>